<sequence length="88" mass="9866">MPKRSPPDTSPVARFEQSLQELEQLVQNMETGALSLEQSLGAYERGIALYRECHQALEQAQLRVRILSDPMHPDDGEPFDPSLVSTSQ</sequence>
<gene>
    <name evidence="1" type="primary">xseB</name>
    <name type="ordered locus">PD_1513</name>
</gene>
<reference key="1">
    <citation type="journal article" date="2003" name="J. Bacteriol.">
        <title>Comparative analyses of the complete genome sequences of Pierce's disease and citrus variegated chlorosis strains of Xylella fastidiosa.</title>
        <authorList>
            <person name="Van Sluys M.A."/>
            <person name="de Oliveira M.C."/>
            <person name="Monteiro-Vitorello C.B."/>
            <person name="Miyaki C.Y."/>
            <person name="Furlan L.R."/>
            <person name="Camargo L.E.A."/>
            <person name="da Silva A.C.R."/>
            <person name="Moon D.H."/>
            <person name="Takita M.A."/>
            <person name="Lemos E.G.M."/>
            <person name="Machado M.A."/>
            <person name="Ferro M.I.T."/>
            <person name="da Silva F.R."/>
            <person name="Goldman M.H.S."/>
            <person name="Goldman G.H."/>
            <person name="Lemos M.V.F."/>
            <person name="El-Dorry H."/>
            <person name="Tsai S.M."/>
            <person name="Carrer H."/>
            <person name="Carraro D.M."/>
            <person name="de Oliveira R.C."/>
            <person name="Nunes L.R."/>
            <person name="Siqueira W.J."/>
            <person name="Coutinho L.L."/>
            <person name="Kimura E.T."/>
            <person name="Ferro E.S."/>
            <person name="Harakava R."/>
            <person name="Kuramae E.E."/>
            <person name="Marino C.L."/>
            <person name="Giglioti E."/>
            <person name="Abreu I.L."/>
            <person name="Alves L.M.C."/>
            <person name="do Amaral A.M."/>
            <person name="Baia G.S."/>
            <person name="Blanco S.R."/>
            <person name="Brito M.S."/>
            <person name="Cannavan F.S."/>
            <person name="Celestino A.V."/>
            <person name="da Cunha A.F."/>
            <person name="Fenille R.C."/>
            <person name="Ferro J.A."/>
            <person name="Formighieri E.F."/>
            <person name="Kishi L.T."/>
            <person name="Leoni S.G."/>
            <person name="Oliveira A.R."/>
            <person name="Rosa V.E. Jr."/>
            <person name="Sassaki F.T."/>
            <person name="Sena J.A.D."/>
            <person name="de Souza A.A."/>
            <person name="Truffi D."/>
            <person name="Tsukumo F."/>
            <person name="Yanai G.M."/>
            <person name="Zaros L.G."/>
            <person name="Civerolo E.L."/>
            <person name="Simpson A.J.G."/>
            <person name="Almeida N.F. Jr."/>
            <person name="Setubal J.C."/>
            <person name="Kitajima J.P."/>
        </authorList>
    </citation>
    <scope>NUCLEOTIDE SEQUENCE [LARGE SCALE GENOMIC DNA]</scope>
    <source>
        <strain>Temecula1 / ATCC 700964</strain>
    </source>
</reference>
<dbReference type="EC" id="3.1.11.6" evidence="1"/>
<dbReference type="EMBL" id="AE009442">
    <property type="protein sequence ID" value="AAO29356.1"/>
    <property type="molecule type" value="Genomic_DNA"/>
</dbReference>
<dbReference type="RefSeq" id="WP_004088658.1">
    <property type="nucleotide sequence ID" value="NC_004556.1"/>
</dbReference>
<dbReference type="SMR" id="Q87BE3"/>
<dbReference type="KEGG" id="xft:PD_1513"/>
<dbReference type="HOGENOM" id="CLU_145918_3_3_6"/>
<dbReference type="Proteomes" id="UP000002516">
    <property type="component" value="Chromosome"/>
</dbReference>
<dbReference type="GO" id="GO:0005829">
    <property type="term" value="C:cytosol"/>
    <property type="evidence" value="ECO:0007669"/>
    <property type="project" value="TreeGrafter"/>
</dbReference>
<dbReference type="GO" id="GO:0009318">
    <property type="term" value="C:exodeoxyribonuclease VII complex"/>
    <property type="evidence" value="ECO:0007669"/>
    <property type="project" value="InterPro"/>
</dbReference>
<dbReference type="GO" id="GO:0008855">
    <property type="term" value="F:exodeoxyribonuclease VII activity"/>
    <property type="evidence" value="ECO:0007669"/>
    <property type="project" value="UniProtKB-UniRule"/>
</dbReference>
<dbReference type="GO" id="GO:0006308">
    <property type="term" value="P:DNA catabolic process"/>
    <property type="evidence" value="ECO:0007669"/>
    <property type="project" value="UniProtKB-UniRule"/>
</dbReference>
<dbReference type="Gene3D" id="1.10.287.1040">
    <property type="entry name" value="Exonuclease VII, small subunit"/>
    <property type="match status" value="1"/>
</dbReference>
<dbReference type="HAMAP" id="MF_00337">
    <property type="entry name" value="Exonuc_7_S"/>
    <property type="match status" value="1"/>
</dbReference>
<dbReference type="InterPro" id="IPR003761">
    <property type="entry name" value="Exonuc_VII_S"/>
</dbReference>
<dbReference type="InterPro" id="IPR037004">
    <property type="entry name" value="Exonuc_VII_ssu_sf"/>
</dbReference>
<dbReference type="NCBIfam" id="NF002140">
    <property type="entry name" value="PRK00977.1-4"/>
    <property type="match status" value="1"/>
</dbReference>
<dbReference type="NCBIfam" id="TIGR01280">
    <property type="entry name" value="xseB"/>
    <property type="match status" value="1"/>
</dbReference>
<dbReference type="PANTHER" id="PTHR34137">
    <property type="entry name" value="EXODEOXYRIBONUCLEASE 7 SMALL SUBUNIT"/>
    <property type="match status" value="1"/>
</dbReference>
<dbReference type="PANTHER" id="PTHR34137:SF1">
    <property type="entry name" value="EXODEOXYRIBONUCLEASE 7 SMALL SUBUNIT"/>
    <property type="match status" value="1"/>
</dbReference>
<dbReference type="Pfam" id="PF02609">
    <property type="entry name" value="Exonuc_VII_S"/>
    <property type="match status" value="1"/>
</dbReference>
<dbReference type="PIRSF" id="PIRSF006488">
    <property type="entry name" value="Exonuc_VII_S"/>
    <property type="match status" value="1"/>
</dbReference>
<dbReference type="SUPFAM" id="SSF116842">
    <property type="entry name" value="XseB-like"/>
    <property type="match status" value="1"/>
</dbReference>
<proteinExistence type="inferred from homology"/>
<protein>
    <recommendedName>
        <fullName evidence="1">Exodeoxyribonuclease 7 small subunit</fullName>
        <ecNumber evidence="1">3.1.11.6</ecNumber>
    </recommendedName>
    <alternativeName>
        <fullName evidence="1">Exodeoxyribonuclease VII small subunit</fullName>
        <shortName evidence="1">Exonuclease VII small subunit</shortName>
    </alternativeName>
</protein>
<keyword id="KW-0963">Cytoplasm</keyword>
<keyword id="KW-0269">Exonuclease</keyword>
<keyword id="KW-0378">Hydrolase</keyword>
<keyword id="KW-0540">Nuclease</keyword>
<keyword id="KW-1185">Reference proteome</keyword>
<accession>Q87BE3</accession>
<evidence type="ECO:0000255" key="1">
    <source>
        <dbReference type="HAMAP-Rule" id="MF_00337"/>
    </source>
</evidence>
<evidence type="ECO:0000256" key="2">
    <source>
        <dbReference type="SAM" id="MobiDB-lite"/>
    </source>
</evidence>
<name>EX7S_XYLFT</name>
<organism>
    <name type="scientific">Xylella fastidiosa (strain Temecula1 / ATCC 700964)</name>
    <dbReference type="NCBI Taxonomy" id="183190"/>
    <lineage>
        <taxon>Bacteria</taxon>
        <taxon>Pseudomonadati</taxon>
        <taxon>Pseudomonadota</taxon>
        <taxon>Gammaproteobacteria</taxon>
        <taxon>Lysobacterales</taxon>
        <taxon>Lysobacteraceae</taxon>
        <taxon>Xylella</taxon>
    </lineage>
</organism>
<comment type="function">
    <text evidence="1">Bidirectionally degrades single-stranded DNA into large acid-insoluble oligonucleotides, which are then degraded further into small acid-soluble oligonucleotides.</text>
</comment>
<comment type="catalytic activity">
    <reaction evidence="1">
        <text>Exonucleolytic cleavage in either 5'- to 3'- or 3'- to 5'-direction to yield nucleoside 5'-phosphates.</text>
        <dbReference type="EC" id="3.1.11.6"/>
    </reaction>
</comment>
<comment type="subunit">
    <text evidence="1">Heterooligomer composed of large and small subunits.</text>
</comment>
<comment type="subcellular location">
    <subcellularLocation>
        <location evidence="1">Cytoplasm</location>
    </subcellularLocation>
</comment>
<comment type="similarity">
    <text evidence="1">Belongs to the XseB family.</text>
</comment>
<feature type="chain" id="PRO_0000207037" description="Exodeoxyribonuclease 7 small subunit">
    <location>
        <begin position="1"/>
        <end position="88"/>
    </location>
</feature>
<feature type="region of interest" description="Disordered" evidence="2">
    <location>
        <begin position="69"/>
        <end position="88"/>
    </location>
</feature>